<gene>
    <name type="primary">rps5</name>
    <name type="synonym">rps501</name>
    <name type="synonym">rps5a</name>
    <name type="ORF">SPAC8C9.08</name>
</gene>
<comment type="function">
    <text evidence="1">Component of the ribosome, a large ribonucleoprotein complex responsible for the synthesis of proteins in the cell. The small ribosomal subunit (SSU) binds messenger RNAs (mRNAs) and translates the encoded message by selecting cognate aminoacyl-transfer RNA (tRNA) molecules. The large subunit (LSU) contains the ribosomal catalytic site termed the peptidyl transferase center (PTC), which catalyzes the formation of peptide bonds, thereby polymerizing the amino acids delivered by tRNAs into a polypeptide chain. The nascent polypeptides leave the ribosome through a tunnel in the LSU and interact with protein factors that function in enzymatic processing, targeting, and the membrane insertion of nascent chains at the exit of the ribosomal tunnel.</text>
</comment>
<comment type="subunit">
    <text evidence="1">Component of the small ribosomal subunit (SSU). Mature yeast ribosomes consist of a small (40S) and a large (60S) subunit. The 40S small subunit contains 1 molecule of ribosomal RNA (18S rRNA) and at least 33 different proteins. The large 60S subunit contains 3 rRNA molecules (25S, 5.8S and 5S rRNA) and at least 46 different proteins.</text>
</comment>
<comment type="subcellular location">
    <subcellularLocation>
        <location evidence="2">Cytoplasm</location>
    </subcellularLocation>
    <subcellularLocation>
        <location evidence="2">Nucleus</location>
        <location evidence="2">Nucleolus</location>
    </subcellularLocation>
</comment>
<comment type="miscellaneous">
    <text>There are 2 genes for uS7 in S.pombe.</text>
</comment>
<comment type="similarity">
    <text evidence="3">Belongs to the universal ribosomal protein uS7 family.</text>
</comment>
<keyword id="KW-0002">3D-structure</keyword>
<keyword id="KW-0963">Cytoplasm</keyword>
<keyword id="KW-0539">Nucleus</keyword>
<keyword id="KW-1185">Reference proteome</keyword>
<keyword id="KW-0687">Ribonucleoprotein</keyword>
<keyword id="KW-0689">Ribosomal protein</keyword>
<organism>
    <name type="scientific">Schizosaccharomyces pombe (strain 972 / ATCC 24843)</name>
    <name type="common">Fission yeast</name>
    <dbReference type="NCBI Taxonomy" id="284812"/>
    <lineage>
        <taxon>Eukaryota</taxon>
        <taxon>Fungi</taxon>
        <taxon>Dikarya</taxon>
        <taxon>Ascomycota</taxon>
        <taxon>Taphrinomycotina</taxon>
        <taxon>Schizosaccharomycetes</taxon>
        <taxon>Schizosaccharomycetales</taxon>
        <taxon>Schizosaccharomycetaceae</taxon>
        <taxon>Schizosaccharomyces</taxon>
    </lineage>
</organism>
<dbReference type="EMBL" id="CU329670">
    <property type="protein sequence ID" value="CAB16296.1"/>
    <property type="molecule type" value="Genomic_DNA"/>
</dbReference>
<dbReference type="PIR" id="T39145">
    <property type="entry name" value="T39145"/>
</dbReference>
<dbReference type="RefSeq" id="NP_594279.1">
    <property type="nucleotide sequence ID" value="NM_001019702.2"/>
</dbReference>
<dbReference type="PDB" id="9AXT">
    <property type="method" value="EM"/>
    <property type="resolution" value="2.40 A"/>
    <property type="chains" value="AI=1-203"/>
</dbReference>
<dbReference type="PDB" id="9AXV">
    <property type="method" value="EM"/>
    <property type="resolution" value="2.40 A"/>
    <property type="chains" value="AI=1-203"/>
</dbReference>
<dbReference type="PDBsum" id="9AXT"/>
<dbReference type="PDBsum" id="9AXV"/>
<dbReference type="EMDB" id="EMD-43972"/>
<dbReference type="EMDB" id="EMD-43976"/>
<dbReference type="SMR" id="O14277"/>
<dbReference type="BioGRID" id="279380">
    <property type="interactions" value="4"/>
</dbReference>
<dbReference type="FunCoup" id="O14277">
    <property type="interactions" value="554"/>
</dbReference>
<dbReference type="STRING" id="284812.O14277"/>
<dbReference type="iPTMnet" id="O14277"/>
<dbReference type="PaxDb" id="4896-SPAC8C9.08.1"/>
<dbReference type="EnsemblFungi" id="SPAC8C9.08.1">
    <property type="protein sequence ID" value="SPAC8C9.08.1:pep"/>
    <property type="gene ID" value="SPAC8C9.08"/>
</dbReference>
<dbReference type="GeneID" id="2542939"/>
<dbReference type="KEGG" id="spo:2542939"/>
<dbReference type="PomBase" id="SPAC8C9.08">
    <property type="gene designation" value="rps5"/>
</dbReference>
<dbReference type="VEuPathDB" id="FungiDB:SPAC8C9.08"/>
<dbReference type="eggNOG" id="KOG3291">
    <property type="taxonomic scope" value="Eukaryota"/>
</dbReference>
<dbReference type="HOGENOM" id="CLU_063975_0_0_1"/>
<dbReference type="InParanoid" id="O14277"/>
<dbReference type="OMA" id="AMKHATY"/>
<dbReference type="PhylomeDB" id="O14277"/>
<dbReference type="Reactome" id="R-SPO-156827">
    <property type="pathway name" value="L13a-mediated translational silencing of Ceruloplasmin expression"/>
</dbReference>
<dbReference type="Reactome" id="R-SPO-1799339">
    <property type="pathway name" value="SRP-dependent cotranslational protein targeting to membrane"/>
</dbReference>
<dbReference type="Reactome" id="R-SPO-72649">
    <property type="pathway name" value="Translation initiation complex formation"/>
</dbReference>
<dbReference type="Reactome" id="R-SPO-72689">
    <property type="pathway name" value="Formation of a pool of free 40S subunits"/>
</dbReference>
<dbReference type="Reactome" id="R-SPO-72695">
    <property type="pathway name" value="Formation of the ternary complex, and subsequently, the 43S complex"/>
</dbReference>
<dbReference type="Reactome" id="R-SPO-72702">
    <property type="pathway name" value="Ribosomal scanning and start codon recognition"/>
</dbReference>
<dbReference type="Reactome" id="R-SPO-72706">
    <property type="pathway name" value="GTP hydrolysis and joining of the 60S ribosomal subunit"/>
</dbReference>
<dbReference type="Reactome" id="R-SPO-975956">
    <property type="pathway name" value="Nonsense Mediated Decay (NMD) independent of the Exon Junction Complex (EJC)"/>
</dbReference>
<dbReference type="Reactome" id="R-SPO-975957">
    <property type="pathway name" value="Nonsense Mediated Decay (NMD) enhanced by the Exon Junction Complex (EJC)"/>
</dbReference>
<dbReference type="PRO" id="PR:O14277"/>
<dbReference type="Proteomes" id="UP000002485">
    <property type="component" value="Chromosome I"/>
</dbReference>
<dbReference type="GO" id="GO:0005829">
    <property type="term" value="C:cytosol"/>
    <property type="evidence" value="ECO:0007005"/>
    <property type="project" value="PomBase"/>
</dbReference>
<dbReference type="GO" id="GO:0022627">
    <property type="term" value="C:cytosolic small ribosomal subunit"/>
    <property type="evidence" value="ECO:0000269"/>
    <property type="project" value="PomBase"/>
</dbReference>
<dbReference type="GO" id="GO:0005730">
    <property type="term" value="C:nucleolus"/>
    <property type="evidence" value="ECO:0007005"/>
    <property type="project" value="PomBase"/>
</dbReference>
<dbReference type="GO" id="GO:0005840">
    <property type="term" value="C:ribosome"/>
    <property type="evidence" value="ECO:0000318"/>
    <property type="project" value="GO_Central"/>
</dbReference>
<dbReference type="GO" id="GO:0003729">
    <property type="term" value="F:mRNA binding"/>
    <property type="evidence" value="ECO:0000318"/>
    <property type="project" value="GO_Central"/>
</dbReference>
<dbReference type="GO" id="GO:0019843">
    <property type="term" value="F:rRNA binding"/>
    <property type="evidence" value="ECO:0000318"/>
    <property type="project" value="GO_Central"/>
</dbReference>
<dbReference type="GO" id="GO:0003735">
    <property type="term" value="F:structural constituent of ribosome"/>
    <property type="evidence" value="ECO:0000318"/>
    <property type="project" value="GO_Central"/>
</dbReference>
<dbReference type="GO" id="GO:0002181">
    <property type="term" value="P:cytoplasmic translation"/>
    <property type="evidence" value="ECO:0000266"/>
    <property type="project" value="PomBase"/>
</dbReference>
<dbReference type="GO" id="GO:0000028">
    <property type="term" value="P:ribosomal small subunit assembly"/>
    <property type="evidence" value="ECO:0000318"/>
    <property type="project" value="GO_Central"/>
</dbReference>
<dbReference type="GO" id="GO:0006412">
    <property type="term" value="P:translation"/>
    <property type="evidence" value="ECO:0000318"/>
    <property type="project" value="GO_Central"/>
</dbReference>
<dbReference type="CDD" id="cd14867">
    <property type="entry name" value="uS7_Eukaryote"/>
    <property type="match status" value="1"/>
</dbReference>
<dbReference type="FunFam" id="1.10.455.10:FF:000002">
    <property type="entry name" value="40S ribosomal protein S5"/>
    <property type="match status" value="1"/>
</dbReference>
<dbReference type="Gene3D" id="1.10.455.10">
    <property type="entry name" value="Ribosomal protein S7 domain"/>
    <property type="match status" value="1"/>
</dbReference>
<dbReference type="InterPro" id="IPR000235">
    <property type="entry name" value="Ribosomal_uS7"/>
</dbReference>
<dbReference type="InterPro" id="IPR020606">
    <property type="entry name" value="Ribosomal_uS7_CS"/>
</dbReference>
<dbReference type="InterPro" id="IPR023798">
    <property type="entry name" value="Ribosomal_uS7_dom"/>
</dbReference>
<dbReference type="InterPro" id="IPR036823">
    <property type="entry name" value="Ribosomal_uS7_dom_sf"/>
</dbReference>
<dbReference type="InterPro" id="IPR005716">
    <property type="entry name" value="Ribosomal_uS7_euk/arc"/>
</dbReference>
<dbReference type="NCBIfam" id="NF003106">
    <property type="entry name" value="PRK04027.1"/>
    <property type="match status" value="1"/>
</dbReference>
<dbReference type="NCBIfam" id="TIGR01028">
    <property type="entry name" value="uS7_euk_arch"/>
    <property type="match status" value="1"/>
</dbReference>
<dbReference type="PANTHER" id="PTHR11205">
    <property type="entry name" value="RIBOSOMAL PROTEIN S7"/>
    <property type="match status" value="1"/>
</dbReference>
<dbReference type="Pfam" id="PF00177">
    <property type="entry name" value="Ribosomal_S7"/>
    <property type="match status" value="1"/>
</dbReference>
<dbReference type="PIRSF" id="PIRSF002122">
    <property type="entry name" value="RPS7p_RPS7a_RPS5e_RPS7o"/>
    <property type="match status" value="1"/>
</dbReference>
<dbReference type="SUPFAM" id="SSF47973">
    <property type="entry name" value="Ribosomal protein S7"/>
    <property type="match status" value="1"/>
</dbReference>
<dbReference type="PROSITE" id="PS00052">
    <property type="entry name" value="RIBOSOMAL_S7"/>
    <property type="match status" value="1"/>
</dbReference>
<reference key="1">
    <citation type="journal article" date="2002" name="Nature">
        <title>The genome sequence of Schizosaccharomyces pombe.</title>
        <authorList>
            <person name="Wood V."/>
            <person name="Gwilliam R."/>
            <person name="Rajandream M.A."/>
            <person name="Lyne M.H."/>
            <person name="Lyne R."/>
            <person name="Stewart A."/>
            <person name="Sgouros J.G."/>
            <person name="Peat N."/>
            <person name="Hayles J."/>
            <person name="Baker S.G."/>
            <person name="Basham D."/>
            <person name="Bowman S."/>
            <person name="Brooks K."/>
            <person name="Brown D."/>
            <person name="Brown S."/>
            <person name="Chillingworth T."/>
            <person name="Churcher C.M."/>
            <person name="Collins M."/>
            <person name="Connor R."/>
            <person name="Cronin A."/>
            <person name="Davis P."/>
            <person name="Feltwell T."/>
            <person name="Fraser A."/>
            <person name="Gentles S."/>
            <person name="Goble A."/>
            <person name="Hamlin N."/>
            <person name="Harris D.E."/>
            <person name="Hidalgo J."/>
            <person name="Hodgson G."/>
            <person name="Holroyd S."/>
            <person name="Hornsby T."/>
            <person name="Howarth S."/>
            <person name="Huckle E.J."/>
            <person name="Hunt S."/>
            <person name="Jagels K."/>
            <person name="James K.D."/>
            <person name="Jones L."/>
            <person name="Jones M."/>
            <person name="Leather S."/>
            <person name="McDonald S."/>
            <person name="McLean J."/>
            <person name="Mooney P."/>
            <person name="Moule S."/>
            <person name="Mungall K.L."/>
            <person name="Murphy L.D."/>
            <person name="Niblett D."/>
            <person name="Odell C."/>
            <person name="Oliver K."/>
            <person name="O'Neil S."/>
            <person name="Pearson D."/>
            <person name="Quail M.A."/>
            <person name="Rabbinowitsch E."/>
            <person name="Rutherford K.M."/>
            <person name="Rutter S."/>
            <person name="Saunders D."/>
            <person name="Seeger K."/>
            <person name="Sharp S."/>
            <person name="Skelton J."/>
            <person name="Simmonds M.N."/>
            <person name="Squares R."/>
            <person name="Squares S."/>
            <person name="Stevens K."/>
            <person name="Taylor K."/>
            <person name="Taylor R.G."/>
            <person name="Tivey A."/>
            <person name="Walsh S.V."/>
            <person name="Warren T."/>
            <person name="Whitehead S."/>
            <person name="Woodward J.R."/>
            <person name="Volckaert G."/>
            <person name="Aert R."/>
            <person name="Robben J."/>
            <person name="Grymonprez B."/>
            <person name="Weltjens I."/>
            <person name="Vanstreels E."/>
            <person name="Rieger M."/>
            <person name="Schaefer M."/>
            <person name="Mueller-Auer S."/>
            <person name="Gabel C."/>
            <person name="Fuchs M."/>
            <person name="Duesterhoeft A."/>
            <person name="Fritzc C."/>
            <person name="Holzer E."/>
            <person name="Moestl D."/>
            <person name="Hilbert H."/>
            <person name="Borzym K."/>
            <person name="Langer I."/>
            <person name="Beck A."/>
            <person name="Lehrach H."/>
            <person name="Reinhardt R."/>
            <person name="Pohl T.M."/>
            <person name="Eger P."/>
            <person name="Zimmermann W."/>
            <person name="Wedler H."/>
            <person name="Wambutt R."/>
            <person name="Purnelle B."/>
            <person name="Goffeau A."/>
            <person name="Cadieu E."/>
            <person name="Dreano S."/>
            <person name="Gloux S."/>
            <person name="Lelaure V."/>
            <person name="Mottier S."/>
            <person name="Galibert F."/>
            <person name="Aves S.J."/>
            <person name="Xiang Z."/>
            <person name="Hunt C."/>
            <person name="Moore K."/>
            <person name="Hurst S.M."/>
            <person name="Lucas M."/>
            <person name="Rochet M."/>
            <person name="Gaillardin C."/>
            <person name="Tallada V.A."/>
            <person name="Garzon A."/>
            <person name="Thode G."/>
            <person name="Daga R.R."/>
            <person name="Cruzado L."/>
            <person name="Jimenez J."/>
            <person name="Sanchez M."/>
            <person name="del Rey F."/>
            <person name="Benito J."/>
            <person name="Dominguez A."/>
            <person name="Revuelta J.L."/>
            <person name="Moreno S."/>
            <person name="Armstrong J."/>
            <person name="Forsburg S.L."/>
            <person name="Cerutti L."/>
            <person name="Lowe T."/>
            <person name="McCombie W.R."/>
            <person name="Paulsen I."/>
            <person name="Potashkin J."/>
            <person name="Shpakovski G.V."/>
            <person name="Ussery D."/>
            <person name="Barrell B.G."/>
            <person name="Nurse P."/>
        </authorList>
    </citation>
    <scope>NUCLEOTIDE SEQUENCE [LARGE SCALE GENOMIC DNA]</scope>
    <source>
        <strain>972 / ATCC 24843</strain>
    </source>
</reference>
<reference key="2">
    <citation type="journal article" date="2006" name="Nat. Biotechnol.">
        <title>ORFeome cloning and global analysis of protein localization in the fission yeast Schizosaccharomyces pombe.</title>
        <authorList>
            <person name="Matsuyama A."/>
            <person name="Arai R."/>
            <person name="Yashiroda Y."/>
            <person name="Shirai A."/>
            <person name="Kamata A."/>
            <person name="Sekido S."/>
            <person name="Kobayashi Y."/>
            <person name="Hashimoto A."/>
            <person name="Hamamoto M."/>
            <person name="Hiraoka Y."/>
            <person name="Horinouchi S."/>
            <person name="Yoshida M."/>
        </authorList>
    </citation>
    <scope>SUBCELLULAR LOCATION [LARGE SCALE ANALYSIS]</scope>
</reference>
<proteinExistence type="evidence at protein level"/>
<evidence type="ECO:0000250" key="1">
    <source>
        <dbReference type="UniProtKB" id="P26783"/>
    </source>
</evidence>
<evidence type="ECO:0000269" key="2">
    <source>
    </source>
</evidence>
<evidence type="ECO:0000305" key="3"/>
<sequence>MATSSLTPGVSLDENGSIKLFNKFPFEGVEVKDISLVDYITIGNGQPLPHTAGRFQTKRFRKARCFIVERLTNSLMMNGRNNGKKLLATRIVKHAFEIIALLTDQNPLQVLVDAVAACGPREDSTRIGSAGTVRRQAVDVSPLRRVNQALALITIGAREAAFRNVKSISECLAEEIINAAKGSSNSYAIKKKDELERVAKSNR</sequence>
<protein>
    <recommendedName>
        <fullName evidence="3">Small ribosomal subunit protein uS7A</fullName>
    </recommendedName>
    <alternativeName>
        <fullName>40S ribosomal protein S5-A</fullName>
    </alternativeName>
</protein>
<feature type="chain" id="PRO_0000124538" description="Small ribosomal subunit protein uS7A">
    <location>
        <begin position="1"/>
        <end position="203"/>
    </location>
</feature>
<name>RS5A_SCHPO</name>
<accession>O14277</accession>